<dbReference type="EC" id="1.14.17.4"/>
<dbReference type="EMBL" id="AF015787">
    <property type="protein sequence ID" value="AAB94031.1"/>
    <property type="molecule type" value="Genomic_DNA"/>
</dbReference>
<dbReference type="PIR" id="T16988">
    <property type="entry name" value="T16988"/>
</dbReference>
<dbReference type="SMR" id="O48882"/>
<dbReference type="BRENDA" id="1.14.17.4">
    <property type="organism ID" value="3164"/>
</dbReference>
<dbReference type="UniPathway" id="UPA00384">
    <property type="reaction ID" value="UER00563"/>
</dbReference>
<dbReference type="GO" id="GO:0009815">
    <property type="term" value="F:1-aminocyclopropane-1-carboxylate oxidase activity"/>
    <property type="evidence" value="ECO:0007669"/>
    <property type="project" value="UniProtKB-EC"/>
</dbReference>
<dbReference type="GO" id="GO:0031418">
    <property type="term" value="F:L-ascorbic acid binding"/>
    <property type="evidence" value="ECO:0007669"/>
    <property type="project" value="UniProtKB-KW"/>
</dbReference>
<dbReference type="GO" id="GO:0046872">
    <property type="term" value="F:metal ion binding"/>
    <property type="evidence" value="ECO:0007669"/>
    <property type="project" value="UniProtKB-KW"/>
</dbReference>
<dbReference type="GO" id="GO:0009693">
    <property type="term" value="P:ethylene biosynthetic process"/>
    <property type="evidence" value="ECO:0007669"/>
    <property type="project" value="UniProtKB-UniPathway"/>
</dbReference>
<dbReference type="GO" id="GO:0009835">
    <property type="term" value="P:fruit ripening"/>
    <property type="evidence" value="ECO:0007669"/>
    <property type="project" value="UniProtKB-KW"/>
</dbReference>
<dbReference type="FunFam" id="2.60.120.330:FF:000002">
    <property type="entry name" value="1-aminocyclopropane-1-carboxylate oxidase 1"/>
    <property type="match status" value="1"/>
</dbReference>
<dbReference type="Gene3D" id="2.60.120.330">
    <property type="entry name" value="B-lactam Antibiotic, Isopenicillin N Synthase, Chain"/>
    <property type="match status" value="1"/>
</dbReference>
<dbReference type="InterPro" id="IPR026992">
    <property type="entry name" value="DIOX_N"/>
</dbReference>
<dbReference type="InterPro" id="IPR044861">
    <property type="entry name" value="IPNS-like_FE2OG_OXY"/>
</dbReference>
<dbReference type="InterPro" id="IPR027443">
    <property type="entry name" value="IPNS-like_sf"/>
</dbReference>
<dbReference type="InterPro" id="IPR005123">
    <property type="entry name" value="Oxoglu/Fe-dep_dioxygenase_dom"/>
</dbReference>
<dbReference type="InterPro" id="IPR050295">
    <property type="entry name" value="Plant_2OG-oxidoreductases"/>
</dbReference>
<dbReference type="PANTHER" id="PTHR47991">
    <property type="entry name" value="OXOGLUTARATE/IRON-DEPENDENT DIOXYGENASE"/>
    <property type="match status" value="1"/>
</dbReference>
<dbReference type="Pfam" id="PF03171">
    <property type="entry name" value="2OG-FeII_Oxy"/>
    <property type="match status" value="1"/>
</dbReference>
<dbReference type="Pfam" id="PF14226">
    <property type="entry name" value="DIOX_N"/>
    <property type="match status" value="1"/>
</dbReference>
<dbReference type="SUPFAM" id="SSF51197">
    <property type="entry name" value="Clavaminate synthase-like"/>
    <property type="match status" value="1"/>
</dbReference>
<dbReference type="PROSITE" id="PS51471">
    <property type="entry name" value="FE2OG_OXY"/>
    <property type="match status" value="1"/>
</dbReference>
<proteinExistence type="evidence at transcript level"/>
<sequence>MATFPVVDMDLINGEERAATLEKINDACENWGFFELVNHGISTELLDTVEKMNKDHYKKTMEQRFKEMVAAKGLEAVQSEIHYLDWESTFFLRHLPSSNISEIPDLEEDYRKTMKEFAVELEKLAEKLLDLLCENLGLEKGYLKKAFYGSKGPNFGTKVSNYPPCPKPDLIKGLRAHTDAGGIILLFQDDKVSGLQLLKDGEWMDVPPVHHSIVINLGDQIEVITNGKYKSIMHRVIAQSDGTRMSIASFYNPGDDAFISPAPALLEEKSEVSPTYPKFLFDDYMKLYSGLKFQAKEPRFEAMKARETTPVETARGLRAVRWNTTKRNQN</sequence>
<protein>
    <recommendedName>
        <fullName>1-aminocyclopropane-1-carboxylate oxidase 2</fullName>
        <shortName>ACC oxidase 2</shortName>
        <ecNumber>1.14.17.4</ecNumber>
    </recommendedName>
    <alternativeName>
        <fullName>Ethylene-forming enzyme</fullName>
        <shortName>EFE</shortName>
    </alternativeName>
</protein>
<organism>
    <name type="scientific">Malus domestica</name>
    <name type="common">Apple</name>
    <name type="synonym">Pyrus malus</name>
    <dbReference type="NCBI Taxonomy" id="3750"/>
    <lineage>
        <taxon>Eukaryota</taxon>
        <taxon>Viridiplantae</taxon>
        <taxon>Streptophyta</taxon>
        <taxon>Embryophyta</taxon>
        <taxon>Tracheophyta</taxon>
        <taxon>Spermatophyta</taxon>
        <taxon>Magnoliopsida</taxon>
        <taxon>eudicotyledons</taxon>
        <taxon>Gunneridae</taxon>
        <taxon>Pentapetalae</taxon>
        <taxon>rosids</taxon>
        <taxon>fabids</taxon>
        <taxon>Rosales</taxon>
        <taxon>Rosaceae</taxon>
        <taxon>Amygdaloideae</taxon>
        <taxon>Maleae</taxon>
        <taxon>Malus</taxon>
    </lineage>
</organism>
<gene>
    <name type="primary">ACO2</name>
</gene>
<accession>O48882</accession>
<comment type="catalytic activity">
    <reaction>
        <text>1-aminocyclopropane-1-carboxylate + L-ascorbate + O2 = ethene + L-dehydroascorbate + hydrogen cyanide + CO2 + 2 H2O</text>
        <dbReference type="Rhea" id="RHEA:23640"/>
        <dbReference type="ChEBI" id="CHEBI:15377"/>
        <dbReference type="ChEBI" id="CHEBI:15379"/>
        <dbReference type="ChEBI" id="CHEBI:16526"/>
        <dbReference type="ChEBI" id="CHEBI:18153"/>
        <dbReference type="ChEBI" id="CHEBI:18407"/>
        <dbReference type="ChEBI" id="CHEBI:38290"/>
        <dbReference type="ChEBI" id="CHEBI:58360"/>
        <dbReference type="ChEBI" id="CHEBI:58539"/>
        <dbReference type="EC" id="1.14.17.4"/>
    </reaction>
</comment>
<comment type="cofactor">
    <cofactor evidence="1">
        <name>Fe cation</name>
        <dbReference type="ChEBI" id="CHEBI:24875"/>
    </cofactor>
</comment>
<comment type="pathway">
    <text>Alkene biosynthesis; ethylene biosynthesis via S-adenosyl-L-methionine; ethylene from S-adenosyl-L-methionine: step 2/2.</text>
</comment>
<comment type="subunit">
    <text evidence="1">Monomer.</text>
</comment>
<comment type="developmental stage">
    <text>Expressed during fruit ripening.</text>
</comment>
<comment type="induction">
    <text>By ethylene and wounding.</text>
</comment>
<comment type="similarity">
    <text evidence="3">Belongs to the iron/ascorbate-dependent oxidoreductase family.</text>
</comment>
<reference key="1">
    <citation type="submission" date="1997-07" db="EMBL/GenBank/DDBJ databases">
        <title>ACC oxidase from apple fruit.</title>
        <authorList>
            <person name="Nam K.H."/>
            <person name="Kim W.T."/>
        </authorList>
    </citation>
    <scope>NUCLEOTIDE SEQUENCE [GENOMIC DNA]</scope>
    <source>
        <strain>cv. Fuji</strain>
        <tissue>Fruit</tissue>
    </source>
</reference>
<keyword id="KW-0266">Ethylene biosynthesis</keyword>
<keyword id="KW-0292">Fruit ripening</keyword>
<keyword id="KW-0408">Iron</keyword>
<keyword id="KW-0479">Metal-binding</keyword>
<keyword id="KW-0560">Oxidoreductase</keyword>
<keyword id="KW-0847">Vitamin C</keyword>
<feature type="chain" id="PRO_0000067266" description="1-aminocyclopropane-1-carboxylate oxidase 2">
    <location>
        <begin position="1"/>
        <end position="330"/>
    </location>
</feature>
<feature type="domain" description="Fe2OG dioxygenase" evidence="2">
    <location>
        <begin position="153"/>
        <end position="253"/>
    </location>
</feature>
<feature type="binding site" evidence="2">
    <location>
        <position position="177"/>
    </location>
    <ligand>
        <name>Fe cation</name>
        <dbReference type="ChEBI" id="CHEBI:24875"/>
    </ligand>
</feature>
<feature type="binding site" evidence="2">
    <location>
        <position position="179"/>
    </location>
    <ligand>
        <name>Fe cation</name>
        <dbReference type="ChEBI" id="CHEBI:24875"/>
    </ligand>
</feature>
<feature type="binding site" evidence="2">
    <location>
        <position position="234"/>
    </location>
    <ligand>
        <name>Fe cation</name>
        <dbReference type="ChEBI" id="CHEBI:24875"/>
    </ligand>
</feature>
<name>ACCO2_MALDO</name>
<evidence type="ECO:0000250" key="1"/>
<evidence type="ECO:0000255" key="2">
    <source>
        <dbReference type="PROSITE-ProRule" id="PRU00805"/>
    </source>
</evidence>
<evidence type="ECO:0000305" key="3"/>